<proteinExistence type="evidence at transcript level"/>
<comment type="function">
    <text>Core component of nucleosome. Nucleosomes wrap and compact DNA into chromatin, limiting DNA accessibility to the cellular machineries which require DNA as a template. Histones thereby play a central role in transcription regulation, DNA repair, DNA replication and chromosomal stability. DNA accessibility is regulated via a complex set of post-translational modifications of histones, also called histone code, and nucleosome remodeling.</text>
</comment>
<comment type="subunit">
    <text>The nucleosome is a histone octamer containing two molecules each of H2A, H2B, H3 and H4 assembled in one H3-H4 heterotetramer and two H2A-H2B heterodimers. The octamer wraps approximately 147 bp of DNA.</text>
</comment>
<comment type="subcellular location">
    <subcellularLocation>
        <location>Nucleus</location>
    </subcellularLocation>
    <subcellularLocation>
        <location>Chromosome</location>
    </subcellularLocation>
</comment>
<comment type="domain">
    <text>Contains one SPKK motif which may interact with the minor groove of A/T-rich DNA sites. Phosphorylation of this motif may regulate DNA binding. This motif is reiterated in both termini of histone H1 and in the N-terminus of sea urchin histones H2B, but its presence in the C-terminus seems to be unique to plant H2A.</text>
</comment>
<comment type="similarity">
    <text evidence="2">Belongs to the histone H2A family.</text>
</comment>
<protein>
    <recommendedName>
        <fullName>Histone H2A</fullName>
    </recommendedName>
</protein>
<feature type="chain" id="PRO_0000055229" description="Histone H2A">
    <location>
        <begin position="1"/>
        <end position="153"/>
    </location>
</feature>
<feature type="region of interest" description="Disordered" evidence="1">
    <location>
        <begin position="1"/>
        <end position="27"/>
    </location>
</feature>
<feature type="region of interest" description="Disordered" evidence="1">
    <location>
        <begin position="131"/>
        <end position="153"/>
    </location>
</feature>
<feature type="short sequence motif" description="SPKK motif">
    <location>
        <begin position="149"/>
        <end position="152"/>
    </location>
</feature>
<feature type="compositionally biased region" description="Low complexity" evidence="1">
    <location>
        <begin position="132"/>
        <end position="147"/>
    </location>
</feature>
<keyword id="KW-0158">Chromosome</keyword>
<keyword id="KW-0238">DNA-binding</keyword>
<keyword id="KW-0544">Nucleosome core</keyword>
<keyword id="KW-0539">Nucleus</keyword>
<sequence length="153" mass="16058">MDTGAKLKKGAGERKGGGPKKKPVSRSVKAGLQFPVGRIGRFLKKGRYAQRVGSGAPVYLAAVLEYLAAEVLELAGNAARDNKKNRIIPRHVLLAVRNDEELGKLLAGVTIAHGGVLPNINPVLLPKKAEKAAAAATKEPKSPAKATKSPKKA</sequence>
<reference key="1">
    <citation type="submission" date="2000-03" db="EMBL/GenBank/DDBJ databases">
        <title>Identification of mRNAs expressed in underground adventitious buds of Euphorbia esula (leafy spurge).</title>
        <authorList>
            <person name="Anderson J.V."/>
            <person name="Horvath D.P."/>
        </authorList>
    </citation>
    <scope>NUCLEOTIDE SEQUENCE [MRNA]</scope>
</reference>
<name>H2A_EUPES</name>
<evidence type="ECO:0000256" key="1">
    <source>
        <dbReference type="SAM" id="MobiDB-lite"/>
    </source>
</evidence>
<evidence type="ECO:0000305" key="2"/>
<dbReference type="EMBL" id="AF242311">
    <property type="protein sequence ID" value="AAF65769.1"/>
    <property type="molecule type" value="mRNA"/>
</dbReference>
<dbReference type="SMR" id="Q9M531"/>
<dbReference type="GO" id="GO:0000786">
    <property type="term" value="C:nucleosome"/>
    <property type="evidence" value="ECO:0007669"/>
    <property type="project" value="UniProtKB-KW"/>
</dbReference>
<dbReference type="GO" id="GO:0005634">
    <property type="term" value="C:nucleus"/>
    <property type="evidence" value="ECO:0007669"/>
    <property type="project" value="UniProtKB-SubCell"/>
</dbReference>
<dbReference type="GO" id="GO:0003677">
    <property type="term" value="F:DNA binding"/>
    <property type="evidence" value="ECO:0007669"/>
    <property type="project" value="UniProtKB-KW"/>
</dbReference>
<dbReference type="GO" id="GO:0046982">
    <property type="term" value="F:protein heterodimerization activity"/>
    <property type="evidence" value="ECO:0007669"/>
    <property type="project" value="InterPro"/>
</dbReference>
<dbReference type="GO" id="GO:0030527">
    <property type="term" value="F:structural constituent of chromatin"/>
    <property type="evidence" value="ECO:0007669"/>
    <property type="project" value="InterPro"/>
</dbReference>
<dbReference type="CDD" id="cd00074">
    <property type="entry name" value="HFD_H2A"/>
    <property type="match status" value="1"/>
</dbReference>
<dbReference type="FunFam" id="1.10.20.10:FF:000026">
    <property type="entry name" value="Histone H2A"/>
    <property type="match status" value="1"/>
</dbReference>
<dbReference type="Gene3D" id="1.10.20.10">
    <property type="entry name" value="Histone, subunit A"/>
    <property type="match status" value="1"/>
</dbReference>
<dbReference type="InterPro" id="IPR009072">
    <property type="entry name" value="Histone-fold"/>
</dbReference>
<dbReference type="InterPro" id="IPR002119">
    <property type="entry name" value="Histone_H2A"/>
</dbReference>
<dbReference type="InterPro" id="IPR007125">
    <property type="entry name" value="Histone_H2A/H2B/H3"/>
</dbReference>
<dbReference type="InterPro" id="IPR032454">
    <property type="entry name" value="Histone_H2A_C"/>
</dbReference>
<dbReference type="InterPro" id="IPR032458">
    <property type="entry name" value="Histone_H2A_CS"/>
</dbReference>
<dbReference type="PANTHER" id="PTHR23430">
    <property type="entry name" value="HISTONE H2A"/>
    <property type="match status" value="1"/>
</dbReference>
<dbReference type="Pfam" id="PF00125">
    <property type="entry name" value="Histone"/>
    <property type="match status" value="1"/>
</dbReference>
<dbReference type="Pfam" id="PF16211">
    <property type="entry name" value="Histone_H2A_C"/>
    <property type="match status" value="1"/>
</dbReference>
<dbReference type="PRINTS" id="PR00620">
    <property type="entry name" value="HISTONEH2A"/>
</dbReference>
<dbReference type="SMART" id="SM00414">
    <property type="entry name" value="H2A"/>
    <property type="match status" value="1"/>
</dbReference>
<dbReference type="SUPFAM" id="SSF47113">
    <property type="entry name" value="Histone-fold"/>
    <property type="match status" value="1"/>
</dbReference>
<dbReference type="PROSITE" id="PS00046">
    <property type="entry name" value="HISTONE_H2A"/>
    <property type="match status" value="1"/>
</dbReference>
<accession>Q9M531</accession>
<organism>
    <name type="scientific">Euphorbia esula</name>
    <name type="common">Leafy spurge</name>
    <dbReference type="NCBI Taxonomy" id="3993"/>
    <lineage>
        <taxon>Eukaryota</taxon>
        <taxon>Viridiplantae</taxon>
        <taxon>Streptophyta</taxon>
        <taxon>Embryophyta</taxon>
        <taxon>Tracheophyta</taxon>
        <taxon>Spermatophyta</taxon>
        <taxon>Magnoliopsida</taxon>
        <taxon>eudicotyledons</taxon>
        <taxon>Gunneridae</taxon>
        <taxon>Pentapetalae</taxon>
        <taxon>rosids</taxon>
        <taxon>fabids</taxon>
        <taxon>Malpighiales</taxon>
        <taxon>Euphorbiaceae</taxon>
        <taxon>Euphorbioideae</taxon>
        <taxon>Euphorbieae</taxon>
        <taxon>Euphorbia</taxon>
        <taxon>Euphorbia subgen. Esula</taxon>
        <taxon>Euphorbia sect. Esula</taxon>
    </lineage>
</organism>